<evidence type="ECO:0000250" key="1"/>
<evidence type="ECO:0000250" key="2">
    <source>
        <dbReference type="UniProtKB" id="A8Q2D1"/>
    </source>
</evidence>
<evidence type="ECO:0000250" key="3">
    <source>
        <dbReference type="UniProtKB" id="P13497"/>
    </source>
</evidence>
<evidence type="ECO:0000255" key="4"/>
<evidence type="ECO:0000255" key="5">
    <source>
        <dbReference type="PROSITE-ProRule" id="PRU01211"/>
    </source>
</evidence>
<evidence type="ECO:0000269" key="6">
    <source>
    </source>
</evidence>
<evidence type="ECO:0000305" key="7"/>
<sequence length="379" mass="43378">MKITVNFLLVALIGVPSVLSDRHITRDKRQAMRDYAKWENNKMSLFFYNLPLEMQAMFRDAINYLENHTCLKFEYNENAETAVRIRKGNGCYSLYGMHAGEVQDLTLDYNCASFGTAVHEIMHALGIAHGQARSDRDDYLIVDSTNSNDGIENTENLVPFDYGSVMLYARDPHSDKRIPIDPEYNFTMGSLRVAFYDMVLLNKFYGCNCDNHPRKLDCKNGGYQNPANCEECLCTDGFNGQLCDQHEGVYVLEAKKEWDASGVRNNYRKGIETNTMPEYTYFALTAPEGSTIEVRITKLSGFFCQHTCDYNGVELKYKTDRRIVSPLVCCDNDNLWNKTRSSTNNPFIIAKYGNNRTPHFEFEYRYIPGNATAAPEENN</sequence>
<name>NAS20_CAEEL</name>
<protein>
    <recommendedName>
        <fullName>Zinc metalloproteinase nas-20</fullName>
        <ecNumber evidence="2">3.4.24.-</ecNumber>
    </recommendedName>
    <alternativeName>
        <fullName>Nematode astacin 20</fullName>
    </alternativeName>
</protein>
<keyword id="KW-0165">Cleavage on pair of basic residues</keyword>
<keyword id="KW-1015">Disulfide bond</keyword>
<keyword id="KW-0245">EGF-like domain</keyword>
<keyword id="KW-0325">Glycoprotein</keyword>
<keyword id="KW-0378">Hydrolase</keyword>
<keyword id="KW-0479">Metal-binding</keyword>
<keyword id="KW-0482">Metalloprotease</keyword>
<keyword id="KW-0645">Protease</keyword>
<keyword id="KW-1185">Reference proteome</keyword>
<keyword id="KW-0964">Secreted</keyword>
<keyword id="KW-0732">Signal</keyword>
<keyword id="KW-0862">Zinc</keyword>
<keyword id="KW-0865">Zymogen</keyword>
<reference key="1">
    <citation type="journal article" date="1998" name="Science">
        <title>Genome sequence of the nematode C. elegans: a platform for investigating biology.</title>
        <authorList>
            <consortium name="The C. elegans sequencing consortium"/>
        </authorList>
    </citation>
    <scope>NUCLEOTIDE SEQUENCE [LARGE SCALE GENOMIC DNA]</scope>
    <source>
        <strain>Bristol N2</strain>
    </source>
</reference>
<reference key="2">
    <citation type="journal article" date="2003" name="Eur. J. Biochem.">
        <title>The astacin protein family in Caenorhabditis elegans.</title>
        <authorList>
            <person name="Moehrlen F."/>
            <person name="Hutter H."/>
            <person name="Zwilling R."/>
        </authorList>
    </citation>
    <scope>NUCLEOTIDE SEQUENCE [MRNA] OF 158-308</scope>
    <scope>NOMENCLATURE</scope>
    <source>
        <strain>Bristol N2</strain>
    </source>
</reference>
<reference key="3">
    <citation type="journal article" date="2007" name="Mol. Cell. Proteomics">
        <title>Proteomics reveals N-linked glycoprotein diversity in Caenorhabditis elegans and suggests an atypical translocation mechanism for integral membrane proteins.</title>
        <authorList>
            <person name="Kaji H."/>
            <person name="Kamiie J."/>
            <person name="Kawakami H."/>
            <person name="Kido K."/>
            <person name="Yamauchi Y."/>
            <person name="Shinkawa T."/>
            <person name="Taoka M."/>
            <person name="Takahashi N."/>
            <person name="Isobe T."/>
        </authorList>
    </citation>
    <scope>GLYCOSYLATION [LARGE SCALE ANALYSIS] AT ASN-185 AND ASN-337</scope>
    <scope>IDENTIFICATION BY MASS SPECTROMETRY</scope>
    <source>
        <strain>Bristol N2</strain>
    </source>
</reference>
<accession>Q22396</accession>
<accession>Q7Z0M9</accession>
<feature type="signal peptide" evidence="4">
    <location>
        <begin position="1"/>
        <end position="20"/>
    </location>
</feature>
<feature type="propeptide" id="PRO_0000442667" evidence="3">
    <location>
        <begin position="21"/>
        <end position="29"/>
    </location>
</feature>
<feature type="chain" id="PRO_0000028924" description="Zinc metalloproteinase nas-20">
    <location>
        <begin position="30"/>
        <end position="379"/>
    </location>
</feature>
<feature type="domain" description="Peptidase M12A" evidence="5">
    <location>
        <begin position="30"/>
        <end position="208"/>
    </location>
</feature>
<feature type="domain" description="EGF-like">
    <location>
        <begin position="203"/>
        <end position="244"/>
    </location>
</feature>
<feature type="active site" evidence="5">
    <location>
        <position position="120"/>
    </location>
</feature>
<feature type="binding site" evidence="5">
    <location>
        <position position="119"/>
    </location>
    <ligand>
        <name>Zn(2+)</name>
        <dbReference type="ChEBI" id="CHEBI:29105"/>
        <note>catalytic</note>
    </ligand>
</feature>
<feature type="binding site" evidence="5">
    <location>
        <position position="123"/>
    </location>
    <ligand>
        <name>Zn(2+)</name>
        <dbReference type="ChEBI" id="CHEBI:29105"/>
        <note>catalytic</note>
    </ligand>
</feature>
<feature type="binding site" evidence="5">
    <location>
        <position position="129"/>
    </location>
    <ligand>
        <name>Zn(2+)</name>
        <dbReference type="ChEBI" id="CHEBI:29105"/>
        <note>catalytic</note>
    </ligand>
</feature>
<feature type="glycosylation site" description="N-linked (GlcNAc...) asparagine" evidence="4">
    <location>
        <position position="67"/>
    </location>
</feature>
<feature type="glycosylation site" description="N-linked (GlcNAc...) asparagine" evidence="6">
    <location>
        <position position="185"/>
    </location>
</feature>
<feature type="glycosylation site" description="N-linked (GlcNAc...) asparagine" evidence="6">
    <location>
        <position position="337"/>
    </location>
</feature>
<feature type="glycosylation site" description="N-linked (GlcNAc...) asparagine" evidence="4">
    <location>
        <position position="370"/>
    </location>
</feature>
<feature type="disulfide bond" evidence="5">
    <location>
        <begin position="70"/>
        <end position="207"/>
    </location>
</feature>
<feature type="disulfide bond" evidence="5">
    <location>
        <begin position="91"/>
        <end position="111"/>
    </location>
</feature>
<feature type="disulfide bond" evidence="1">
    <location>
        <begin position="209"/>
        <end position="229"/>
    </location>
</feature>
<feature type="disulfide bond" evidence="1">
    <location>
        <begin position="234"/>
        <end position="243"/>
    </location>
</feature>
<dbReference type="EC" id="3.4.24.-" evidence="2"/>
<dbReference type="EMBL" id="Z74042">
    <property type="protein sequence ID" value="CAA98528.2"/>
    <property type="molecule type" value="Genomic_DNA"/>
</dbReference>
<dbReference type="EMBL" id="AJ561210">
    <property type="protein sequence ID" value="CAD99212.1"/>
    <property type="molecule type" value="mRNA"/>
</dbReference>
<dbReference type="PIR" id="T24836">
    <property type="entry name" value="T24836"/>
</dbReference>
<dbReference type="RefSeq" id="NP_505906.2">
    <property type="nucleotide sequence ID" value="NM_073505.9"/>
</dbReference>
<dbReference type="SMR" id="Q22396"/>
<dbReference type="STRING" id="6239.T11F9.3.2"/>
<dbReference type="MEROPS" id="M12.A42"/>
<dbReference type="GlyCosmos" id="Q22396">
    <property type="glycosylation" value="4 sites, No reported glycans"/>
</dbReference>
<dbReference type="iPTMnet" id="Q22396"/>
<dbReference type="PaxDb" id="6239-T11F9.3"/>
<dbReference type="PeptideAtlas" id="Q22396"/>
<dbReference type="EnsemblMetazoa" id="T11F9.3.1">
    <property type="protein sequence ID" value="T11F9.3.1"/>
    <property type="gene ID" value="WBGene00003539"/>
</dbReference>
<dbReference type="GeneID" id="188420"/>
<dbReference type="KEGG" id="cel:CELE_T11F9.3"/>
<dbReference type="UCSC" id="T11F9.3">
    <property type="organism name" value="c. elegans"/>
</dbReference>
<dbReference type="AGR" id="WB:WBGene00003539"/>
<dbReference type="CTD" id="188420"/>
<dbReference type="WormBase" id="T11F9.3">
    <property type="protein sequence ID" value="CE35907"/>
    <property type="gene ID" value="WBGene00003539"/>
    <property type="gene designation" value="nas-20"/>
</dbReference>
<dbReference type="eggNOG" id="KOG3714">
    <property type="taxonomic scope" value="Eukaryota"/>
</dbReference>
<dbReference type="GeneTree" id="ENSGT00940000169788"/>
<dbReference type="HOGENOM" id="CLU_017286_1_1_1"/>
<dbReference type="InParanoid" id="Q22396"/>
<dbReference type="OMA" id="MQAMFRD"/>
<dbReference type="OrthoDB" id="5780917at2759"/>
<dbReference type="PhylomeDB" id="Q22396"/>
<dbReference type="PRO" id="PR:Q22396"/>
<dbReference type="Proteomes" id="UP000001940">
    <property type="component" value="Chromosome V"/>
</dbReference>
<dbReference type="Bgee" id="WBGene00003539">
    <property type="expression patterns" value="Expressed in adult organism and 1 other cell type or tissue"/>
</dbReference>
<dbReference type="GO" id="GO:0005576">
    <property type="term" value="C:extracellular region"/>
    <property type="evidence" value="ECO:0007669"/>
    <property type="project" value="UniProtKB-SubCell"/>
</dbReference>
<dbReference type="GO" id="GO:0004222">
    <property type="term" value="F:metalloendopeptidase activity"/>
    <property type="evidence" value="ECO:0000318"/>
    <property type="project" value="GO_Central"/>
</dbReference>
<dbReference type="GO" id="GO:0008270">
    <property type="term" value="F:zinc ion binding"/>
    <property type="evidence" value="ECO:0007669"/>
    <property type="project" value="InterPro"/>
</dbReference>
<dbReference type="GO" id="GO:0018996">
    <property type="term" value="P:molting cycle, collagen and cuticulin-based cuticle"/>
    <property type="evidence" value="ECO:0007669"/>
    <property type="project" value="InterPro"/>
</dbReference>
<dbReference type="GO" id="GO:0006508">
    <property type="term" value="P:proteolysis"/>
    <property type="evidence" value="ECO:0007669"/>
    <property type="project" value="UniProtKB-KW"/>
</dbReference>
<dbReference type="Gene3D" id="3.40.390.10">
    <property type="entry name" value="Collagenase (Catalytic Domain)"/>
    <property type="match status" value="1"/>
</dbReference>
<dbReference type="InterPro" id="IPR024079">
    <property type="entry name" value="MetalloPept_cat_dom_sf"/>
</dbReference>
<dbReference type="InterPro" id="IPR017050">
    <property type="entry name" value="Metallopeptidase_nem"/>
</dbReference>
<dbReference type="InterPro" id="IPR001506">
    <property type="entry name" value="Peptidase_M12A"/>
</dbReference>
<dbReference type="InterPro" id="IPR006026">
    <property type="entry name" value="Peptidase_Metallo"/>
</dbReference>
<dbReference type="PANTHER" id="PTHR10127">
    <property type="entry name" value="DISCOIDIN, CUB, EGF, LAMININ , AND ZINC METALLOPROTEASE DOMAIN CONTAINING"/>
    <property type="match status" value="1"/>
</dbReference>
<dbReference type="PANTHER" id="PTHR10127:SF786">
    <property type="entry name" value="ZINC METALLOPROTEINASE NAS-20"/>
    <property type="match status" value="1"/>
</dbReference>
<dbReference type="Pfam" id="PF01400">
    <property type="entry name" value="Astacin"/>
    <property type="match status" value="1"/>
</dbReference>
<dbReference type="PIRSF" id="PIRSF036365">
    <property type="entry name" value="Astacin_nematoda"/>
    <property type="match status" value="1"/>
</dbReference>
<dbReference type="PRINTS" id="PR00480">
    <property type="entry name" value="ASTACIN"/>
</dbReference>
<dbReference type="SMART" id="SM00235">
    <property type="entry name" value="ZnMc"/>
    <property type="match status" value="1"/>
</dbReference>
<dbReference type="SUPFAM" id="SSF55486">
    <property type="entry name" value="Metalloproteases ('zincins'), catalytic domain"/>
    <property type="match status" value="1"/>
</dbReference>
<dbReference type="PROSITE" id="PS51864">
    <property type="entry name" value="ASTACIN"/>
    <property type="match status" value="1"/>
</dbReference>
<dbReference type="PROSITE" id="PS00022">
    <property type="entry name" value="EGF_1"/>
    <property type="match status" value="1"/>
</dbReference>
<dbReference type="PROSITE" id="PS01186">
    <property type="entry name" value="EGF_2"/>
    <property type="match status" value="1"/>
</dbReference>
<dbReference type="PROSITE" id="PS00142">
    <property type="entry name" value="ZINC_PROTEASE"/>
    <property type="match status" value="1"/>
</dbReference>
<comment type="function">
    <text evidence="2">Metalloprotease.</text>
</comment>
<comment type="cofactor">
    <cofactor evidence="5">
        <name>Zn(2+)</name>
        <dbReference type="ChEBI" id="CHEBI:29105"/>
    </cofactor>
    <text evidence="5">Binds 1 zinc ion per subunit.</text>
</comment>
<comment type="subcellular location">
    <subcellularLocation>
        <location evidence="7">Secreted</location>
    </subcellularLocation>
</comment>
<gene>
    <name type="primary">nas-20</name>
    <name type="ORF">T11F9.3</name>
</gene>
<proteinExistence type="evidence at protein level"/>
<organism>
    <name type="scientific">Caenorhabditis elegans</name>
    <dbReference type="NCBI Taxonomy" id="6239"/>
    <lineage>
        <taxon>Eukaryota</taxon>
        <taxon>Metazoa</taxon>
        <taxon>Ecdysozoa</taxon>
        <taxon>Nematoda</taxon>
        <taxon>Chromadorea</taxon>
        <taxon>Rhabditida</taxon>
        <taxon>Rhabditina</taxon>
        <taxon>Rhabditomorpha</taxon>
        <taxon>Rhabditoidea</taxon>
        <taxon>Rhabditidae</taxon>
        <taxon>Peloderinae</taxon>
        <taxon>Caenorhabditis</taxon>
    </lineage>
</organism>